<protein>
    <recommendedName>
        <fullName>Protein PXR1</fullName>
    </recommendedName>
    <alternativeName>
        <fullName>PinX1-related protein 1</fullName>
    </alternativeName>
</protein>
<reference key="1">
    <citation type="journal article" date="2004" name="Nature">
        <title>Genome evolution in yeasts.</title>
        <authorList>
            <person name="Dujon B."/>
            <person name="Sherman D."/>
            <person name="Fischer G."/>
            <person name="Durrens P."/>
            <person name="Casaregola S."/>
            <person name="Lafontaine I."/>
            <person name="de Montigny J."/>
            <person name="Marck C."/>
            <person name="Neuveglise C."/>
            <person name="Talla E."/>
            <person name="Goffard N."/>
            <person name="Frangeul L."/>
            <person name="Aigle M."/>
            <person name="Anthouard V."/>
            <person name="Babour A."/>
            <person name="Barbe V."/>
            <person name="Barnay S."/>
            <person name="Blanchin S."/>
            <person name="Beckerich J.-M."/>
            <person name="Beyne E."/>
            <person name="Bleykasten C."/>
            <person name="Boisrame A."/>
            <person name="Boyer J."/>
            <person name="Cattolico L."/>
            <person name="Confanioleri F."/>
            <person name="de Daruvar A."/>
            <person name="Despons L."/>
            <person name="Fabre E."/>
            <person name="Fairhead C."/>
            <person name="Ferry-Dumazet H."/>
            <person name="Groppi A."/>
            <person name="Hantraye F."/>
            <person name="Hennequin C."/>
            <person name="Jauniaux N."/>
            <person name="Joyet P."/>
            <person name="Kachouri R."/>
            <person name="Kerrest A."/>
            <person name="Koszul R."/>
            <person name="Lemaire M."/>
            <person name="Lesur I."/>
            <person name="Ma L."/>
            <person name="Muller H."/>
            <person name="Nicaud J.-M."/>
            <person name="Nikolski M."/>
            <person name="Oztas S."/>
            <person name="Ozier-Kalogeropoulos O."/>
            <person name="Pellenz S."/>
            <person name="Potier S."/>
            <person name="Richard G.-F."/>
            <person name="Straub M.-L."/>
            <person name="Suleau A."/>
            <person name="Swennen D."/>
            <person name="Tekaia F."/>
            <person name="Wesolowski-Louvel M."/>
            <person name="Westhof E."/>
            <person name="Wirth B."/>
            <person name="Zeniou-Meyer M."/>
            <person name="Zivanovic Y."/>
            <person name="Bolotin-Fukuhara M."/>
            <person name="Thierry A."/>
            <person name="Bouchier C."/>
            <person name="Caudron B."/>
            <person name="Scarpelli C."/>
            <person name="Gaillardin C."/>
            <person name="Weissenbach J."/>
            <person name="Wincker P."/>
            <person name="Souciet J.-L."/>
        </authorList>
    </citation>
    <scope>NUCLEOTIDE SEQUENCE [LARGE SCALE GENOMIC DNA]</scope>
    <source>
        <strain>ATCC 36239 / CBS 767 / BCRC 21394 / JCM 1990 / NBRC 0083 / IGC 2968</strain>
    </source>
</reference>
<keyword id="KW-0539">Nucleus</keyword>
<keyword id="KW-1185">Reference proteome</keyword>
<keyword id="KW-0690">Ribosome biogenesis</keyword>
<keyword id="KW-0698">rRNA processing</keyword>
<accession>Q6BUE3</accession>
<dbReference type="EMBL" id="CR382135">
    <property type="protein sequence ID" value="CAG86250.1"/>
    <property type="molecule type" value="Genomic_DNA"/>
</dbReference>
<dbReference type="RefSeq" id="XP_458176.1">
    <property type="nucleotide sequence ID" value="XM_458176.1"/>
</dbReference>
<dbReference type="FunCoup" id="Q6BUE3">
    <property type="interactions" value="253"/>
</dbReference>
<dbReference type="STRING" id="284592.Q6BUE3"/>
<dbReference type="GeneID" id="2900241"/>
<dbReference type="KEGG" id="dha:DEHA2C11506g"/>
<dbReference type="eggNOG" id="KOG2809">
    <property type="taxonomic scope" value="Eukaryota"/>
</dbReference>
<dbReference type="HOGENOM" id="CLU_052839_0_0_1"/>
<dbReference type="InParanoid" id="Q6BUE3"/>
<dbReference type="OMA" id="PCWDQSS"/>
<dbReference type="OrthoDB" id="29523at2759"/>
<dbReference type="Proteomes" id="UP000000599">
    <property type="component" value="Chromosome C"/>
</dbReference>
<dbReference type="GO" id="GO:0005730">
    <property type="term" value="C:nucleolus"/>
    <property type="evidence" value="ECO:0007669"/>
    <property type="project" value="UniProtKB-SubCell"/>
</dbReference>
<dbReference type="GO" id="GO:0005654">
    <property type="term" value="C:nucleoplasm"/>
    <property type="evidence" value="ECO:0007669"/>
    <property type="project" value="EnsemblFungi"/>
</dbReference>
<dbReference type="GO" id="GO:0032040">
    <property type="term" value="C:small-subunit processome"/>
    <property type="evidence" value="ECO:0007669"/>
    <property type="project" value="EnsemblFungi"/>
</dbReference>
<dbReference type="GO" id="GO:0008047">
    <property type="term" value="F:enzyme activator activity"/>
    <property type="evidence" value="ECO:0007669"/>
    <property type="project" value="EnsemblFungi"/>
</dbReference>
<dbReference type="GO" id="GO:0003676">
    <property type="term" value="F:nucleic acid binding"/>
    <property type="evidence" value="ECO:0007669"/>
    <property type="project" value="InterPro"/>
</dbReference>
<dbReference type="GO" id="GO:0010521">
    <property type="term" value="F:telomerase inhibitor activity"/>
    <property type="evidence" value="ECO:0007669"/>
    <property type="project" value="EnsemblFungi"/>
</dbReference>
<dbReference type="GO" id="GO:0000494">
    <property type="term" value="P:box C/D sno(s)RNA 3'-end processing"/>
    <property type="evidence" value="ECO:0007669"/>
    <property type="project" value="EnsemblFungi"/>
</dbReference>
<dbReference type="GO" id="GO:0032211">
    <property type="term" value="P:negative regulation of telomere maintenance via telomerase"/>
    <property type="evidence" value="ECO:0007669"/>
    <property type="project" value="EnsemblFungi"/>
</dbReference>
<dbReference type="GO" id="GO:0006364">
    <property type="term" value="P:rRNA processing"/>
    <property type="evidence" value="ECO:0007669"/>
    <property type="project" value="UniProtKB-KW"/>
</dbReference>
<dbReference type="InterPro" id="IPR000467">
    <property type="entry name" value="G_patch_dom"/>
</dbReference>
<dbReference type="InterPro" id="IPR050656">
    <property type="entry name" value="PINX1"/>
</dbReference>
<dbReference type="PANTHER" id="PTHR23149">
    <property type="entry name" value="G PATCH DOMAIN CONTAINING PROTEIN"/>
    <property type="match status" value="1"/>
</dbReference>
<dbReference type="PANTHER" id="PTHR23149:SF31">
    <property type="entry name" value="PROTEIN PXR1"/>
    <property type="match status" value="1"/>
</dbReference>
<dbReference type="Pfam" id="PF01585">
    <property type="entry name" value="G-patch"/>
    <property type="match status" value="1"/>
</dbReference>
<dbReference type="SMART" id="SM00443">
    <property type="entry name" value="G_patch"/>
    <property type="match status" value="1"/>
</dbReference>
<dbReference type="PROSITE" id="PS50174">
    <property type="entry name" value="G_PATCH"/>
    <property type="match status" value="1"/>
</dbReference>
<sequence length="316" mass="36976">MGLAGTKVKQRFGLDPRNTNWSNDTSRFGHQYLERMGWKPGKGLGLVEHATTSHVKVSIKDDNLGLGSKLAKKQKTDEFDSGECSGLDVFQRILGRLNGKEDQINKEIERKRKDNIINGKWGIQFIKGEVLQSTWDKEAKKLLDKGTTKKRKIDSVDSSEESTTSSDSKQHKKKKIKKDRKEKEEKKTEKENSEIKKKKKEKKEKKEKKEKKDKNEKKEKKDKNEKKEKKDKNEEKEKKEKKEKKEKKDKKDKKDKKDKKEKKEVKEVTRDSMLMPKEQLNQQIATRLSVRSKWIKQKRASVMDAKALNEIFMVTS</sequence>
<organism>
    <name type="scientific">Debaryomyces hansenii (strain ATCC 36239 / CBS 767 / BCRC 21394 / JCM 1990 / NBRC 0083 / IGC 2968)</name>
    <name type="common">Yeast</name>
    <name type="synonym">Torulaspora hansenii</name>
    <dbReference type="NCBI Taxonomy" id="284592"/>
    <lineage>
        <taxon>Eukaryota</taxon>
        <taxon>Fungi</taxon>
        <taxon>Dikarya</taxon>
        <taxon>Ascomycota</taxon>
        <taxon>Saccharomycotina</taxon>
        <taxon>Pichiomycetes</taxon>
        <taxon>Debaryomycetaceae</taxon>
        <taxon>Debaryomyces</taxon>
    </lineage>
</organism>
<comment type="function">
    <text evidence="1">Involved in rRNA-processing at A0, A1 and A2 sites and negatively regulates telomerase.</text>
</comment>
<comment type="subcellular location">
    <subcellularLocation>
        <location evidence="1">Nucleus</location>
        <location evidence="1">Nucleolus</location>
    </subcellularLocation>
</comment>
<comment type="similarity">
    <text evidence="4">Belongs to the PINX1 family.</text>
</comment>
<name>PXR1_DEBHA</name>
<proteinExistence type="inferred from homology"/>
<gene>
    <name type="primary">PXR1</name>
    <name type="ordered locus">DEHA2C11506g</name>
</gene>
<evidence type="ECO:0000250" key="1"/>
<evidence type="ECO:0000255" key="2">
    <source>
        <dbReference type="PROSITE-ProRule" id="PRU00092"/>
    </source>
</evidence>
<evidence type="ECO:0000256" key="3">
    <source>
        <dbReference type="SAM" id="MobiDB-lite"/>
    </source>
</evidence>
<evidence type="ECO:0000305" key="4"/>
<feature type="initiator methionine" description="Removed" evidence="4">
    <location>
        <position position="1"/>
    </location>
</feature>
<feature type="chain" id="PRO_0000324888" description="Protein PXR1">
    <location>
        <begin position="2"/>
        <end position="316"/>
    </location>
</feature>
<feature type="domain" description="G-patch" evidence="2">
    <location>
        <begin position="25"/>
        <end position="71"/>
    </location>
</feature>
<feature type="region of interest" description="Disordered" evidence="3">
    <location>
        <begin position="146"/>
        <end position="280"/>
    </location>
</feature>
<feature type="compositionally biased region" description="Basic and acidic residues" evidence="3">
    <location>
        <begin position="179"/>
        <end position="195"/>
    </location>
</feature>
<feature type="compositionally biased region" description="Basic residues" evidence="3">
    <location>
        <begin position="196"/>
        <end position="209"/>
    </location>
</feature>
<feature type="compositionally biased region" description="Basic and acidic residues" evidence="3">
    <location>
        <begin position="210"/>
        <end position="240"/>
    </location>
</feature>
<feature type="compositionally biased region" description="Basic residues" evidence="3">
    <location>
        <begin position="241"/>
        <end position="260"/>
    </location>
</feature>
<feature type="compositionally biased region" description="Basic and acidic residues" evidence="3">
    <location>
        <begin position="261"/>
        <end position="270"/>
    </location>
</feature>